<organism>
    <name type="scientific">Influenza A virus (strain A/Goose/Guangxi/345/2005 H5N1 genotype G)</name>
    <dbReference type="NCBI Taxonomy" id="365089"/>
    <lineage>
        <taxon>Viruses</taxon>
        <taxon>Riboviria</taxon>
        <taxon>Orthornavirae</taxon>
        <taxon>Negarnaviricota</taxon>
        <taxon>Polyploviricotina</taxon>
        <taxon>Insthoviricetes</taxon>
        <taxon>Articulavirales</taxon>
        <taxon>Orthomyxoviridae</taxon>
        <taxon>Alphainfluenzavirus</taxon>
        <taxon>Alphainfluenzavirus influenzae</taxon>
        <taxon>Influenza A virus</taxon>
    </lineage>
</organism>
<proteinExistence type="inferred from homology"/>
<name>NCAP_I05A1</name>
<keyword id="KW-0167">Capsid protein</keyword>
<keyword id="KW-1139">Helical capsid protein</keyword>
<keyword id="KW-1048">Host nucleus</keyword>
<keyword id="KW-0945">Host-virus interaction</keyword>
<keyword id="KW-0687">Ribonucleoprotein</keyword>
<keyword id="KW-0694">RNA-binding</keyword>
<keyword id="KW-0543">Viral nucleoprotein</keyword>
<keyword id="KW-1163">Viral penetration into host nucleus</keyword>
<keyword id="KW-0946">Virion</keyword>
<keyword id="KW-1160">Virus entry into host cell</keyword>
<protein>
    <recommendedName>
        <fullName evidence="1">Nucleoprotein</fullName>
    </recommendedName>
    <alternativeName>
        <fullName evidence="1">Nucleocapsid protein</fullName>
        <shortName evidence="1">Protein N</shortName>
    </alternativeName>
</protein>
<evidence type="ECO:0000255" key="1">
    <source>
        <dbReference type="HAMAP-Rule" id="MF_04070"/>
    </source>
</evidence>
<evidence type="ECO:0000256" key="2">
    <source>
        <dbReference type="SAM" id="MobiDB-lite"/>
    </source>
</evidence>
<dbReference type="EMBL" id="DQ321093">
    <property type="protein sequence ID" value="ABC66735.1"/>
    <property type="molecule type" value="Genomic_RNA"/>
</dbReference>
<dbReference type="SMR" id="Q2LFN9"/>
<dbReference type="GO" id="GO:0019029">
    <property type="term" value="C:helical viral capsid"/>
    <property type="evidence" value="ECO:0007669"/>
    <property type="project" value="UniProtKB-KW"/>
</dbReference>
<dbReference type="GO" id="GO:0043657">
    <property type="term" value="C:host cell"/>
    <property type="evidence" value="ECO:0007669"/>
    <property type="project" value="GOC"/>
</dbReference>
<dbReference type="GO" id="GO:0042025">
    <property type="term" value="C:host cell nucleus"/>
    <property type="evidence" value="ECO:0007669"/>
    <property type="project" value="UniProtKB-SubCell"/>
</dbReference>
<dbReference type="GO" id="GO:1990904">
    <property type="term" value="C:ribonucleoprotein complex"/>
    <property type="evidence" value="ECO:0007669"/>
    <property type="project" value="UniProtKB-KW"/>
</dbReference>
<dbReference type="GO" id="GO:0019013">
    <property type="term" value="C:viral nucleocapsid"/>
    <property type="evidence" value="ECO:0007669"/>
    <property type="project" value="UniProtKB-KW"/>
</dbReference>
<dbReference type="GO" id="GO:0003723">
    <property type="term" value="F:RNA binding"/>
    <property type="evidence" value="ECO:0007669"/>
    <property type="project" value="UniProtKB-KW"/>
</dbReference>
<dbReference type="GO" id="GO:0005198">
    <property type="term" value="F:structural molecule activity"/>
    <property type="evidence" value="ECO:0007669"/>
    <property type="project" value="InterPro"/>
</dbReference>
<dbReference type="GO" id="GO:0046718">
    <property type="term" value="P:symbiont entry into host cell"/>
    <property type="evidence" value="ECO:0007669"/>
    <property type="project" value="UniProtKB-KW"/>
</dbReference>
<dbReference type="GO" id="GO:0075732">
    <property type="term" value="P:viral penetration into host nucleus"/>
    <property type="evidence" value="ECO:0007669"/>
    <property type="project" value="UniProtKB-KW"/>
</dbReference>
<dbReference type="HAMAP" id="MF_04070">
    <property type="entry name" value="INFV_NCAP"/>
    <property type="match status" value="1"/>
</dbReference>
<dbReference type="InterPro" id="IPR002141">
    <property type="entry name" value="Flu_NP"/>
</dbReference>
<dbReference type="Pfam" id="PF00506">
    <property type="entry name" value="Flu_NP"/>
    <property type="match status" value="1"/>
</dbReference>
<dbReference type="SUPFAM" id="SSF161003">
    <property type="entry name" value="flu NP-like"/>
    <property type="match status" value="1"/>
</dbReference>
<organismHost>
    <name type="scientific">Aves</name>
    <dbReference type="NCBI Taxonomy" id="8782"/>
</organismHost>
<organismHost>
    <name type="scientific">Felis catus</name>
    <name type="common">Cat</name>
    <name type="synonym">Felis silvestris catus</name>
    <dbReference type="NCBI Taxonomy" id="9685"/>
</organismHost>
<organismHost>
    <name type="scientific">Homo sapiens</name>
    <name type="common">Human</name>
    <dbReference type="NCBI Taxonomy" id="9606"/>
</organismHost>
<organismHost>
    <name type="scientific">Panthera pardus</name>
    <name type="common">Leopard</name>
    <name type="synonym">Felis pardus</name>
    <dbReference type="NCBI Taxonomy" id="9691"/>
</organismHost>
<organismHost>
    <name type="scientific">Panthera tigris</name>
    <name type="common">Tiger</name>
    <dbReference type="NCBI Taxonomy" id="9694"/>
</organismHost>
<organismHost>
    <name type="scientific">Sus scrofa</name>
    <name type="common">Pig</name>
    <dbReference type="NCBI Taxonomy" id="9823"/>
</organismHost>
<accession>Q2LFN9</accession>
<comment type="function">
    <text evidence="1">Encapsidates the negative strand viral RNA, protecting it from nucleases. The encapsidated genomic RNA is termed the ribonucleoprotein (RNP) and serves as template for transcription and replication. The RNP needs to be localized in the host nucleus to start an infectious cycle, but is too large to diffuse through the nuclear pore complex. NP comprises at least 2 nuclear localization signals that are responsible for the active RNP import into the nucleus through cellular importin alpha/beta pathway. Later in the infection, nclear export of RNPs are mediated through viral proteins NEP interacting with M1 which binds nucleoproteins. It is possible that nucleoprotein binds directly host exportin-1/XPO1 and plays an active role in RNPs nuclear export. M1 interaction with RNP seems to hide nucleoprotein's nuclear localization signals. Soon after a virion infects a new cell, M1 dissociates from the RNP under acidification of the virion driven by M2 protein. Dissociation of M1 from RNP unmasks nucleoprotein's nuclear localization signals, targeting the RNP to the nucleus.</text>
</comment>
<comment type="subunit">
    <text evidence="1">Homomultimerizes to form the nucleocapsid. May bind host exportin-1/XPO1. Binds to viral genomic RNA. Protein-RNA contacts are mediated by a combination of electrostatic interactions between positively charged residues and the phosphate backbone and planar interactions between aromatic side chains and bases.</text>
</comment>
<comment type="subcellular location">
    <subcellularLocation>
        <location evidence="1">Virion</location>
    </subcellularLocation>
    <subcellularLocation>
        <location evidence="1">Host nucleus</location>
    </subcellularLocation>
</comment>
<comment type="PTM">
    <text evidence="1">Late in virus-infected cells, may be cleaved from a 56-kDa protein to a 53-kDa protein by a cellular caspase. This cleavage might be a marker for the onset of apoptosis in infected cells or have a specific function in virus host interaction.</text>
</comment>
<comment type="similarity">
    <text evidence="1">Belongs to the influenza viruses nucleoprotein family.</text>
</comment>
<reference key="1">
    <citation type="journal article" date="2006" name="Proc. Natl. Acad. Sci. U.S.A.">
        <title>Emergence and predominance of an H5N1 influenza variant in China.</title>
        <authorList>
            <person name="Smith G.J."/>
            <person name="Fan X.H."/>
            <person name="Wang J."/>
            <person name="Li K.S."/>
            <person name="Qin K."/>
            <person name="Zhang J.X."/>
            <person name="Vijaykrishna D."/>
            <person name="Cheung C.L."/>
            <person name="Huang K."/>
            <person name="Rayner J.M."/>
            <person name="Peiris J.S."/>
            <person name="Chen H."/>
            <person name="Webster R.G."/>
            <person name="Guan Y."/>
        </authorList>
    </citation>
    <scope>NUCLEOTIDE SEQUENCE [GENOMIC RNA]</scope>
</reference>
<feature type="chain" id="PRO_0000310928" description="Nucleoprotein">
    <location>
        <begin position="1"/>
        <end position="485" status="greater than"/>
    </location>
</feature>
<feature type="region of interest" description="Disordered" evidence="2">
    <location>
        <begin position="1"/>
        <end position="21"/>
    </location>
</feature>
<feature type="short sequence motif" description="Unconventional nuclear localization signal" evidence="1">
    <location>
        <begin position="1"/>
        <end position="18"/>
    </location>
</feature>
<feature type="short sequence motif" description="Bipartite nuclear localization signal" evidence="1">
    <location>
        <begin position="198"/>
        <end position="216"/>
    </location>
</feature>
<feature type="non-terminal residue">
    <location>
        <position position="485"/>
    </location>
</feature>
<gene>
    <name evidence="1" type="primary">NP</name>
</gene>
<sequence length="485" mass="54737">MASQGTKRSYEQMETGGERQNATEIRASVGRMVSGIGRFYIQMCTELKLSDHEGRLIQNSITIERMVLSAFDERRNRYLEEHPSAGKDPKKTGGPIYRRRDGKWVRELILYDKEEIRRIWRQANNGEDATAGLTHLMIWHSNLNDATYQRTRALVRTGMDPRMCSLMQGSTLPRRSGAAGAAVKGVGTMVMELIRMIKRGINDRNFWRGENGRRTRIAYERMCNILKGKFQTAAQRAMMDQVRESRNPGNAEIEDLIFLARSALILRGSVAHKSCLPACVYGLAVASGYDFEREGYSLVGIDPFRLLQNSQVFSLIRPNENPAHKSQLVWMACHSAAFEDLRVSSFIRGTRVVPRGQLSTRGVQIASNENMEAIDSNTLELRSRYWAIRTRSGGNTNQQRASAGQISVQPTFSVQRNLPFERATIMAAFTGNTEGRTSDMRTEIIRMMESARPEDVSFQGRGVFELSDEKATNPIVPSFDMNNEG</sequence>